<name>UB2L3_PONAB</name>
<accession>Q5R5I4</accession>
<reference key="1">
    <citation type="submission" date="2004-11" db="EMBL/GenBank/DDBJ databases">
        <authorList>
            <consortium name="The German cDNA consortium"/>
        </authorList>
    </citation>
    <scope>NUCLEOTIDE SEQUENCE [LARGE SCALE MRNA]</scope>
    <source>
        <tissue>Kidney</tissue>
    </source>
</reference>
<comment type="function">
    <text evidence="1">Ubiquitin-conjugating enzyme E2 that specifically acts with HECT-type and RBR family E3 ubiquitin-protein ligases. Does not function with most RING-containing E3 ubiquitin-protein ligases because it lacks intrinsic E3-independent reactivity with lysine: in contrast, it has activity with the RBR family E3 enzymes, such as PRKN, RNF31 and ARIH1, that function like RING-HECT hybrids. Accepts ubiquitin from the E1 complex and catalyzes its covalent attachment to other proteins. Mediates ubiquitination by the CUL9-RBX1 complex (By similarity). In vitro catalyzes 'Lys-11'-linked polyubiquitination. Involved in the selective degradation of short-lived and abnormal proteins. Down-regulated during the S-phase it is involved in progression through the cell cycle. Regulates nuclear hormone receptors transcriptional activity. May play a role in myelopoiesis.</text>
</comment>
<comment type="catalytic activity">
    <reaction evidence="2 3">
        <text>S-ubiquitinyl-[E1 ubiquitin-activating enzyme]-L-cysteine + [E2 ubiquitin-conjugating enzyme]-L-cysteine = [E1 ubiquitin-activating enzyme]-L-cysteine + S-ubiquitinyl-[E2 ubiquitin-conjugating enzyme]-L-cysteine.</text>
        <dbReference type="EC" id="2.3.2.23"/>
    </reaction>
</comment>
<comment type="pathway">
    <text evidence="2">Protein modification; protein ubiquitination.</text>
</comment>
<comment type="subunit">
    <text evidence="1">Interacts with PRKN; involved in ubiquitination and degradation of misfolded proteins. Interacts with UBE3A. Interacts with CCNB1IP1, CBL, ZAP70, RNF19A, RNF19B and RNF144B. Interacts with ARIH1. Interacts with ARIH2 (via RING-type 1). Interacts with NCOA1; they functionally interact to regulate progesterone receptor transcriptional activity. Interacts with NDFIP1 (via N-terminus); the interaction mediates recruitment of UBE2L3 to ITCH and causes MAP3K7 ubiquitination.</text>
</comment>
<comment type="subcellular location">
    <subcellularLocation>
        <location evidence="1">Nucleus</location>
    </subcellularLocation>
    <subcellularLocation>
        <location evidence="1">Cytoplasm</location>
    </subcellularLocation>
</comment>
<comment type="domain">
    <text evidence="1">In contrast to other ubiquitin-conjugating enzymes E2, residues essential for lysine reactivity are absent: Pro and a His residues are present instead of an Asp and an Asp residues in positions 88 and 119, respectively.</text>
</comment>
<comment type="PTM">
    <text evidence="1">Ubiquitinated. The alteration of UBE2L3 protein levels during the S-phase of the cell cycle is due to ubiquitin-dependent proteasomal degradation. Autoubiquitinated in vitro.</text>
</comment>
<comment type="similarity">
    <text evidence="2">Belongs to the ubiquitin-conjugating enzyme family.</text>
</comment>
<keyword id="KW-0007">Acetylation</keyword>
<keyword id="KW-0067">ATP-binding</keyword>
<keyword id="KW-0963">Cytoplasm</keyword>
<keyword id="KW-0547">Nucleotide-binding</keyword>
<keyword id="KW-0539">Nucleus</keyword>
<keyword id="KW-1185">Reference proteome</keyword>
<keyword id="KW-0804">Transcription</keyword>
<keyword id="KW-0805">Transcription regulation</keyword>
<keyword id="KW-0808">Transferase</keyword>
<keyword id="KW-0832">Ubl conjugation</keyword>
<keyword id="KW-0833">Ubl conjugation pathway</keyword>
<protein>
    <recommendedName>
        <fullName>Ubiquitin-conjugating enzyme E2 L3</fullName>
        <ecNumber>2.3.2.23</ecNumber>
    </recommendedName>
    <alternativeName>
        <fullName>E2 ubiquitin-conjugating enzyme L3</fullName>
    </alternativeName>
    <alternativeName>
        <fullName>Ubiquitin carrier protein L3</fullName>
    </alternativeName>
    <alternativeName>
        <fullName>Ubiquitin-protein ligase L3</fullName>
    </alternativeName>
</protein>
<feature type="chain" id="PRO_0000281856" description="Ubiquitin-conjugating enzyme E2 L3">
    <location>
        <begin position="1"/>
        <end position="154"/>
    </location>
</feature>
<feature type="domain" description="UBC core" evidence="2">
    <location>
        <begin position="2"/>
        <end position="149"/>
    </location>
</feature>
<feature type="active site" description="Glycyl thioester intermediate" evidence="2 3">
    <location>
        <position position="86"/>
    </location>
</feature>
<feature type="modified residue" description="N6-acetyllysine" evidence="1">
    <location>
        <position position="131"/>
    </location>
</feature>
<organism>
    <name type="scientific">Pongo abelii</name>
    <name type="common">Sumatran orangutan</name>
    <name type="synonym">Pongo pygmaeus abelii</name>
    <dbReference type="NCBI Taxonomy" id="9601"/>
    <lineage>
        <taxon>Eukaryota</taxon>
        <taxon>Metazoa</taxon>
        <taxon>Chordata</taxon>
        <taxon>Craniata</taxon>
        <taxon>Vertebrata</taxon>
        <taxon>Euteleostomi</taxon>
        <taxon>Mammalia</taxon>
        <taxon>Eutheria</taxon>
        <taxon>Euarchontoglires</taxon>
        <taxon>Primates</taxon>
        <taxon>Haplorrhini</taxon>
        <taxon>Catarrhini</taxon>
        <taxon>Hominidae</taxon>
        <taxon>Pongo</taxon>
    </lineage>
</organism>
<proteinExistence type="evidence at transcript level"/>
<sequence length="154" mass="17890">MAASRRLMKELEEIRKCGMKNFRNIRVDEANLLTWQGLIVPDNPPYDKGAFRIEINFPAEYPFKPPKITFKTKIYHPNIDEKGQVCLPVISAENWKPATKTDQVIQSLIALVNDPQPEHPLRADLAEEYSKDRKKFCKNAEEFTKKYGEKRPVD</sequence>
<dbReference type="EC" id="2.3.2.23"/>
<dbReference type="EMBL" id="CR860875">
    <property type="protein sequence ID" value="CAH92982.1"/>
    <property type="molecule type" value="mRNA"/>
</dbReference>
<dbReference type="RefSeq" id="NP_001127614.1">
    <property type="nucleotide sequence ID" value="NM_001134142.1"/>
</dbReference>
<dbReference type="BMRB" id="Q5R5I4"/>
<dbReference type="SMR" id="Q5R5I4"/>
<dbReference type="STRING" id="9601.ENSPPYP00000012943"/>
<dbReference type="GeneID" id="100174693"/>
<dbReference type="KEGG" id="pon:100174693"/>
<dbReference type="CTD" id="7332"/>
<dbReference type="eggNOG" id="KOG0422">
    <property type="taxonomic scope" value="Eukaryota"/>
</dbReference>
<dbReference type="InParanoid" id="Q5R5I4"/>
<dbReference type="OrthoDB" id="9973183at2759"/>
<dbReference type="UniPathway" id="UPA00143"/>
<dbReference type="Proteomes" id="UP000001595">
    <property type="component" value="Unplaced"/>
</dbReference>
<dbReference type="GO" id="GO:0005737">
    <property type="term" value="C:cytoplasm"/>
    <property type="evidence" value="ECO:0000250"/>
    <property type="project" value="UniProtKB"/>
</dbReference>
<dbReference type="GO" id="GO:0005634">
    <property type="term" value="C:nucleus"/>
    <property type="evidence" value="ECO:0000250"/>
    <property type="project" value="UniProtKB"/>
</dbReference>
<dbReference type="GO" id="GO:0005524">
    <property type="term" value="F:ATP binding"/>
    <property type="evidence" value="ECO:0007669"/>
    <property type="project" value="UniProtKB-KW"/>
</dbReference>
<dbReference type="GO" id="GO:0003713">
    <property type="term" value="F:transcription coactivator activity"/>
    <property type="evidence" value="ECO:0000250"/>
    <property type="project" value="UniProtKB"/>
</dbReference>
<dbReference type="GO" id="GO:0061631">
    <property type="term" value="F:ubiquitin conjugating enzyme activity"/>
    <property type="evidence" value="ECO:0007669"/>
    <property type="project" value="UniProtKB-EC"/>
</dbReference>
<dbReference type="GO" id="GO:0004842">
    <property type="term" value="F:ubiquitin-protein transferase activity"/>
    <property type="evidence" value="ECO:0000250"/>
    <property type="project" value="UniProtKB"/>
</dbReference>
<dbReference type="GO" id="GO:0044770">
    <property type="term" value="P:cell cycle phase transition"/>
    <property type="evidence" value="ECO:0000250"/>
    <property type="project" value="UniProtKB"/>
</dbReference>
<dbReference type="GO" id="GO:0008283">
    <property type="term" value="P:cell population proliferation"/>
    <property type="evidence" value="ECO:0000250"/>
    <property type="project" value="UniProtKB"/>
</dbReference>
<dbReference type="GO" id="GO:0071385">
    <property type="term" value="P:cellular response to glucocorticoid stimulus"/>
    <property type="evidence" value="ECO:0000250"/>
    <property type="project" value="UniProtKB"/>
</dbReference>
<dbReference type="GO" id="GO:0071383">
    <property type="term" value="P:cellular response to steroid hormone stimulus"/>
    <property type="evidence" value="ECO:0000250"/>
    <property type="project" value="UniProtKB"/>
</dbReference>
<dbReference type="GO" id="GO:0070979">
    <property type="term" value="P:protein K11-linked ubiquitination"/>
    <property type="evidence" value="ECO:0000250"/>
    <property type="project" value="UniProtKB"/>
</dbReference>
<dbReference type="GO" id="GO:0000209">
    <property type="term" value="P:protein polyubiquitination"/>
    <property type="evidence" value="ECO:0000250"/>
    <property type="project" value="UniProtKB"/>
</dbReference>
<dbReference type="GO" id="GO:0016567">
    <property type="term" value="P:protein ubiquitination"/>
    <property type="evidence" value="ECO:0000250"/>
    <property type="project" value="UniProtKB"/>
</dbReference>
<dbReference type="GO" id="GO:0006355">
    <property type="term" value="P:regulation of DNA-templated transcription"/>
    <property type="evidence" value="ECO:0000250"/>
    <property type="project" value="UniProtKB"/>
</dbReference>
<dbReference type="CDD" id="cd23801">
    <property type="entry name" value="UBCc_UBE2L3"/>
    <property type="match status" value="1"/>
</dbReference>
<dbReference type="FunFam" id="3.10.110.10:FF:000011">
    <property type="entry name" value="Ubiquitin-conjugating enzyme E2 L3"/>
    <property type="match status" value="1"/>
</dbReference>
<dbReference type="Gene3D" id="3.10.110.10">
    <property type="entry name" value="Ubiquitin Conjugating Enzyme"/>
    <property type="match status" value="1"/>
</dbReference>
<dbReference type="InterPro" id="IPR050113">
    <property type="entry name" value="Ub_conjugating_enzyme"/>
</dbReference>
<dbReference type="InterPro" id="IPR000608">
    <property type="entry name" value="UBQ-conjugat_E2_core"/>
</dbReference>
<dbReference type="InterPro" id="IPR023313">
    <property type="entry name" value="UBQ-conjugating_AS"/>
</dbReference>
<dbReference type="InterPro" id="IPR016135">
    <property type="entry name" value="UBQ-conjugating_enzyme/RWD"/>
</dbReference>
<dbReference type="PANTHER" id="PTHR24067">
    <property type="entry name" value="UBIQUITIN-CONJUGATING ENZYME E2"/>
    <property type="match status" value="1"/>
</dbReference>
<dbReference type="Pfam" id="PF00179">
    <property type="entry name" value="UQ_con"/>
    <property type="match status" value="1"/>
</dbReference>
<dbReference type="SMART" id="SM00212">
    <property type="entry name" value="UBCc"/>
    <property type="match status" value="1"/>
</dbReference>
<dbReference type="SUPFAM" id="SSF54495">
    <property type="entry name" value="UBC-like"/>
    <property type="match status" value="1"/>
</dbReference>
<dbReference type="PROSITE" id="PS00183">
    <property type="entry name" value="UBC_1"/>
    <property type="match status" value="1"/>
</dbReference>
<dbReference type="PROSITE" id="PS50127">
    <property type="entry name" value="UBC_2"/>
    <property type="match status" value="1"/>
</dbReference>
<evidence type="ECO:0000250" key="1">
    <source>
        <dbReference type="UniProtKB" id="P68036"/>
    </source>
</evidence>
<evidence type="ECO:0000255" key="2">
    <source>
        <dbReference type="PROSITE-ProRule" id="PRU00388"/>
    </source>
</evidence>
<evidence type="ECO:0000255" key="3">
    <source>
        <dbReference type="PROSITE-ProRule" id="PRU10133"/>
    </source>
</evidence>
<gene>
    <name type="primary">UBE2L3</name>
</gene>